<keyword id="KW-0004">4Fe-4S</keyword>
<keyword id="KW-0997">Cell inner membrane</keyword>
<keyword id="KW-1003">Cell membrane</keyword>
<keyword id="KW-0249">Electron transport</keyword>
<keyword id="KW-0408">Iron</keyword>
<keyword id="KW-0411">Iron-sulfur</keyword>
<keyword id="KW-0472">Membrane</keyword>
<keyword id="KW-0479">Metal-binding</keyword>
<keyword id="KW-0677">Repeat</keyword>
<keyword id="KW-1278">Translocase</keyword>
<keyword id="KW-0813">Transport</keyword>
<sequence>MSAVWIAVIAISLLGLIFGLILGYASRRFAVQDDPVVEKIDELLPQSQCGQCGYPGCRPYAEAVGAQGEKINRCAPGGEAVMLKIAALLNVDPQPVDGDEQEAEPVRMLAVIDEPNCIGCTKCIQACPVDAIVGATRAMHTVMNDLCTGCNLCVAPCPTQCISLVPVATTPETWKWDLHAIPVRNIPVEQHV</sequence>
<organism>
    <name type="scientific">Klebsiella pneumoniae (strain 342)</name>
    <dbReference type="NCBI Taxonomy" id="507522"/>
    <lineage>
        <taxon>Bacteria</taxon>
        <taxon>Pseudomonadati</taxon>
        <taxon>Pseudomonadota</taxon>
        <taxon>Gammaproteobacteria</taxon>
        <taxon>Enterobacterales</taxon>
        <taxon>Enterobacteriaceae</taxon>
        <taxon>Klebsiella/Raoultella group</taxon>
        <taxon>Klebsiella</taxon>
        <taxon>Klebsiella pneumoniae complex</taxon>
    </lineage>
</organism>
<protein>
    <recommendedName>
        <fullName evidence="1">Ion-translocating oxidoreductase complex subunit B</fullName>
        <ecNumber evidence="1">7.-.-.-</ecNumber>
    </recommendedName>
    <alternativeName>
        <fullName evidence="1">Rnf electron transport complex subunit B</fullName>
    </alternativeName>
</protein>
<accession>B5XWQ0</accession>
<gene>
    <name evidence="1" type="primary">rnfB</name>
    <name type="ordered locus">KPK_2383</name>
</gene>
<comment type="function">
    <text evidence="1">Part of a membrane-bound complex that couples electron transfer with translocation of ions across the membrane.</text>
</comment>
<comment type="cofactor">
    <cofactor evidence="1">
        <name>[4Fe-4S] cluster</name>
        <dbReference type="ChEBI" id="CHEBI:49883"/>
    </cofactor>
    <text evidence="1">Binds 3 [4Fe-4S] clusters.</text>
</comment>
<comment type="subunit">
    <text evidence="1">The complex is composed of six subunits: RnfA, RnfB, RnfC, RnfD, RnfE and RnfG.</text>
</comment>
<comment type="subcellular location">
    <subcellularLocation>
        <location evidence="1">Cell inner membrane</location>
    </subcellularLocation>
</comment>
<comment type="similarity">
    <text evidence="1">Belongs to the 4Fe4S bacterial-type ferredoxin family. RnfB subfamily.</text>
</comment>
<evidence type="ECO:0000255" key="1">
    <source>
        <dbReference type="HAMAP-Rule" id="MF_00463"/>
    </source>
</evidence>
<dbReference type="EC" id="7.-.-.-" evidence="1"/>
<dbReference type="EMBL" id="CP000964">
    <property type="protein sequence ID" value="ACI08737.1"/>
    <property type="molecule type" value="Genomic_DNA"/>
</dbReference>
<dbReference type="KEGG" id="kpe:KPK_2383"/>
<dbReference type="HOGENOM" id="CLU_063448_2_0_6"/>
<dbReference type="Proteomes" id="UP000001734">
    <property type="component" value="Chromosome"/>
</dbReference>
<dbReference type="GO" id="GO:0005886">
    <property type="term" value="C:plasma membrane"/>
    <property type="evidence" value="ECO:0007669"/>
    <property type="project" value="UniProtKB-SubCell"/>
</dbReference>
<dbReference type="GO" id="GO:0051539">
    <property type="term" value="F:4 iron, 4 sulfur cluster binding"/>
    <property type="evidence" value="ECO:0007669"/>
    <property type="project" value="UniProtKB-UniRule"/>
</dbReference>
<dbReference type="GO" id="GO:0009055">
    <property type="term" value="F:electron transfer activity"/>
    <property type="evidence" value="ECO:0007669"/>
    <property type="project" value="InterPro"/>
</dbReference>
<dbReference type="GO" id="GO:0046872">
    <property type="term" value="F:metal ion binding"/>
    <property type="evidence" value="ECO:0007669"/>
    <property type="project" value="UniProtKB-KW"/>
</dbReference>
<dbReference type="GO" id="GO:0022900">
    <property type="term" value="P:electron transport chain"/>
    <property type="evidence" value="ECO:0007669"/>
    <property type="project" value="UniProtKB-UniRule"/>
</dbReference>
<dbReference type="FunFam" id="1.10.15.40:FF:000001">
    <property type="entry name" value="Ion-translocating oxidoreductase complex subunit B"/>
    <property type="match status" value="1"/>
</dbReference>
<dbReference type="Gene3D" id="3.30.70.20">
    <property type="match status" value="1"/>
</dbReference>
<dbReference type="Gene3D" id="1.10.15.40">
    <property type="entry name" value="Electron transport complex subunit B, putative Fe-S cluster"/>
    <property type="match status" value="1"/>
</dbReference>
<dbReference type="HAMAP" id="MF_00463">
    <property type="entry name" value="RsxB_RnfB"/>
    <property type="match status" value="1"/>
</dbReference>
<dbReference type="InterPro" id="IPR007202">
    <property type="entry name" value="4Fe-4S_dom"/>
</dbReference>
<dbReference type="InterPro" id="IPR017896">
    <property type="entry name" value="4Fe4S_Fe-S-bd"/>
</dbReference>
<dbReference type="InterPro" id="IPR017900">
    <property type="entry name" value="4Fe4S_Fe_S_CS"/>
</dbReference>
<dbReference type="InterPro" id="IPR050395">
    <property type="entry name" value="4Fe4S_Ferredoxin_RnfB"/>
</dbReference>
<dbReference type="InterPro" id="IPR010207">
    <property type="entry name" value="Elect_transpt_cplx_RnfB/RsxB"/>
</dbReference>
<dbReference type="InterPro" id="IPR016463">
    <property type="entry name" value="RnfB/RsxB_Proteobac"/>
</dbReference>
<dbReference type="NCBIfam" id="NF003475">
    <property type="entry name" value="PRK05113.1"/>
    <property type="match status" value="1"/>
</dbReference>
<dbReference type="NCBIfam" id="TIGR01944">
    <property type="entry name" value="rnfB"/>
    <property type="match status" value="1"/>
</dbReference>
<dbReference type="PANTHER" id="PTHR43560">
    <property type="entry name" value="ION-TRANSLOCATING OXIDOREDUCTASE COMPLEX SUBUNIT B"/>
    <property type="match status" value="1"/>
</dbReference>
<dbReference type="PANTHER" id="PTHR43560:SF1">
    <property type="entry name" value="ION-TRANSLOCATING OXIDOREDUCTASE COMPLEX SUBUNIT B"/>
    <property type="match status" value="1"/>
</dbReference>
<dbReference type="Pfam" id="PF14697">
    <property type="entry name" value="Fer4_21"/>
    <property type="match status" value="1"/>
</dbReference>
<dbReference type="Pfam" id="PF04060">
    <property type="entry name" value="FeS"/>
    <property type="match status" value="1"/>
</dbReference>
<dbReference type="PIRSF" id="PIRSF005784">
    <property type="entry name" value="Elect_transpt_RnfB"/>
    <property type="match status" value="1"/>
</dbReference>
<dbReference type="SUPFAM" id="SSF54862">
    <property type="entry name" value="4Fe-4S ferredoxins"/>
    <property type="match status" value="1"/>
</dbReference>
<dbReference type="PROSITE" id="PS51656">
    <property type="entry name" value="4FE4S"/>
    <property type="match status" value="1"/>
</dbReference>
<dbReference type="PROSITE" id="PS00198">
    <property type="entry name" value="4FE4S_FER_1"/>
    <property type="match status" value="2"/>
</dbReference>
<dbReference type="PROSITE" id="PS51379">
    <property type="entry name" value="4FE4S_FER_2"/>
    <property type="match status" value="2"/>
</dbReference>
<feature type="chain" id="PRO_1000194486" description="Ion-translocating oxidoreductase complex subunit B">
    <location>
        <begin position="1"/>
        <end position="192"/>
    </location>
</feature>
<feature type="domain" description="4Fe-4S" evidence="1">
    <location>
        <begin position="32"/>
        <end position="91"/>
    </location>
</feature>
<feature type="domain" description="4Fe-4S ferredoxin-type 1" evidence="1">
    <location>
        <begin position="108"/>
        <end position="137"/>
    </location>
</feature>
<feature type="domain" description="4Fe-4S ferredoxin-type 2" evidence="1">
    <location>
        <begin position="138"/>
        <end position="167"/>
    </location>
</feature>
<feature type="region of interest" description="Hydrophobic" evidence="1">
    <location>
        <begin position="1"/>
        <end position="26"/>
    </location>
</feature>
<feature type="binding site" evidence="1">
    <location>
        <position position="49"/>
    </location>
    <ligand>
        <name>[4Fe-4S] cluster</name>
        <dbReference type="ChEBI" id="CHEBI:49883"/>
        <label>1</label>
    </ligand>
</feature>
<feature type="binding site" evidence="1">
    <location>
        <position position="52"/>
    </location>
    <ligand>
        <name>[4Fe-4S] cluster</name>
        <dbReference type="ChEBI" id="CHEBI:49883"/>
        <label>1</label>
    </ligand>
</feature>
<feature type="binding site" evidence="1">
    <location>
        <position position="57"/>
    </location>
    <ligand>
        <name>[4Fe-4S] cluster</name>
        <dbReference type="ChEBI" id="CHEBI:49883"/>
        <label>1</label>
    </ligand>
</feature>
<feature type="binding site" evidence="1">
    <location>
        <position position="74"/>
    </location>
    <ligand>
        <name>[4Fe-4S] cluster</name>
        <dbReference type="ChEBI" id="CHEBI:49883"/>
        <label>1</label>
    </ligand>
</feature>
<feature type="binding site" evidence="1">
    <location>
        <position position="117"/>
    </location>
    <ligand>
        <name>[4Fe-4S] cluster</name>
        <dbReference type="ChEBI" id="CHEBI:49883"/>
        <label>2</label>
    </ligand>
</feature>
<feature type="binding site" evidence="1">
    <location>
        <position position="120"/>
    </location>
    <ligand>
        <name>[4Fe-4S] cluster</name>
        <dbReference type="ChEBI" id="CHEBI:49883"/>
        <label>2</label>
    </ligand>
</feature>
<feature type="binding site" evidence="1">
    <location>
        <position position="123"/>
    </location>
    <ligand>
        <name>[4Fe-4S] cluster</name>
        <dbReference type="ChEBI" id="CHEBI:49883"/>
        <label>2</label>
    </ligand>
</feature>
<feature type="binding site" evidence="1">
    <location>
        <position position="127"/>
    </location>
    <ligand>
        <name>[4Fe-4S] cluster</name>
        <dbReference type="ChEBI" id="CHEBI:49883"/>
        <label>3</label>
    </ligand>
</feature>
<feature type="binding site" evidence="1">
    <location>
        <position position="147"/>
    </location>
    <ligand>
        <name>[4Fe-4S] cluster</name>
        <dbReference type="ChEBI" id="CHEBI:49883"/>
        <label>3</label>
    </ligand>
</feature>
<feature type="binding site" evidence="1">
    <location>
        <position position="150"/>
    </location>
    <ligand>
        <name>[4Fe-4S] cluster</name>
        <dbReference type="ChEBI" id="CHEBI:49883"/>
        <label>3</label>
    </ligand>
</feature>
<feature type="binding site" evidence="1">
    <location>
        <position position="153"/>
    </location>
    <ligand>
        <name>[4Fe-4S] cluster</name>
        <dbReference type="ChEBI" id="CHEBI:49883"/>
        <label>3</label>
    </ligand>
</feature>
<feature type="binding site" evidence="1">
    <location>
        <position position="157"/>
    </location>
    <ligand>
        <name>[4Fe-4S] cluster</name>
        <dbReference type="ChEBI" id="CHEBI:49883"/>
        <label>2</label>
    </ligand>
</feature>
<proteinExistence type="inferred from homology"/>
<reference key="1">
    <citation type="journal article" date="2008" name="PLoS Genet.">
        <title>Complete genome sequence of the N2-fixing broad host range endophyte Klebsiella pneumoniae 342 and virulence predictions verified in mice.</title>
        <authorList>
            <person name="Fouts D.E."/>
            <person name="Tyler H.L."/>
            <person name="DeBoy R.T."/>
            <person name="Daugherty S."/>
            <person name="Ren Q."/>
            <person name="Badger J.H."/>
            <person name="Durkin A.S."/>
            <person name="Huot H."/>
            <person name="Shrivastava S."/>
            <person name="Kothari S."/>
            <person name="Dodson R.J."/>
            <person name="Mohamoud Y."/>
            <person name="Khouri H."/>
            <person name="Roesch L.F.W."/>
            <person name="Krogfelt K.A."/>
            <person name="Struve C."/>
            <person name="Triplett E.W."/>
            <person name="Methe B.A."/>
        </authorList>
    </citation>
    <scope>NUCLEOTIDE SEQUENCE [LARGE SCALE GENOMIC DNA]</scope>
    <source>
        <strain>342</strain>
    </source>
</reference>
<name>RNFB_KLEP3</name>